<name>CDD_ECO45</name>
<protein>
    <recommendedName>
        <fullName evidence="1">Cytidine deaminase</fullName>
        <ecNumber evidence="1">3.5.4.5</ecNumber>
    </recommendedName>
    <alternativeName>
        <fullName evidence="1">Cytidine aminohydrolase</fullName>
        <shortName evidence="1">CDA</shortName>
    </alternativeName>
</protein>
<gene>
    <name evidence="1" type="primary">cdd</name>
    <name type="ordered locus">ECS88_2289</name>
</gene>
<dbReference type="EC" id="3.5.4.5" evidence="1"/>
<dbReference type="EMBL" id="CU928161">
    <property type="protein sequence ID" value="CAR03571.1"/>
    <property type="molecule type" value="Genomic_DNA"/>
</dbReference>
<dbReference type="RefSeq" id="WP_000553553.1">
    <property type="nucleotide sequence ID" value="NC_011742.1"/>
</dbReference>
<dbReference type="SMR" id="B7MF55"/>
<dbReference type="KEGG" id="ecz:ECS88_2289"/>
<dbReference type="HOGENOM" id="CLU_052424_0_0_6"/>
<dbReference type="Proteomes" id="UP000000747">
    <property type="component" value="Chromosome"/>
</dbReference>
<dbReference type="GO" id="GO:0005829">
    <property type="term" value="C:cytosol"/>
    <property type="evidence" value="ECO:0007669"/>
    <property type="project" value="TreeGrafter"/>
</dbReference>
<dbReference type="GO" id="GO:0004126">
    <property type="term" value="F:cytidine deaminase activity"/>
    <property type="evidence" value="ECO:0007669"/>
    <property type="project" value="UniProtKB-UniRule"/>
</dbReference>
<dbReference type="GO" id="GO:0042802">
    <property type="term" value="F:identical protein binding"/>
    <property type="evidence" value="ECO:0007669"/>
    <property type="project" value="UniProtKB-ARBA"/>
</dbReference>
<dbReference type="GO" id="GO:0008270">
    <property type="term" value="F:zinc ion binding"/>
    <property type="evidence" value="ECO:0007669"/>
    <property type="project" value="UniProtKB-UniRule"/>
</dbReference>
<dbReference type="GO" id="GO:0009972">
    <property type="term" value="P:cytidine deamination"/>
    <property type="evidence" value="ECO:0007669"/>
    <property type="project" value="InterPro"/>
</dbReference>
<dbReference type="CDD" id="cd01283">
    <property type="entry name" value="cytidine_deaminase"/>
    <property type="match status" value="2"/>
</dbReference>
<dbReference type="FunFam" id="3.40.140.10:FF:000006">
    <property type="entry name" value="Cytidine deaminase"/>
    <property type="match status" value="1"/>
</dbReference>
<dbReference type="FunFam" id="3.40.140.10:FF:000007">
    <property type="entry name" value="Cytidine deaminase"/>
    <property type="match status" value="1"/>
</dbReference>
<dbReference type="Gene3D" id="3.40.140.10">
    <property type="entry name" value="Cytidine Deaminase, domain 2"/>
    <property type="match status" value="2"/>
</dbReference>
<dbReference type="HAMAP" id="MF_01558">
    <property type="entry name" value="Cyt_deam"/>
    <property type="match status" value="1"/>
</dbReference>
<dbReference type="InterPro" id="IPR016192">
    <property type="entry name" value="APOBEC/CMP_deaminase_Zn-bd"/>
</dbReference>
<dbReference type="InterPro" id="IPR002125">
    <property type="entry name" value="CMP_dCMP_dom"/>
</dbReference>
<dbReference type="InterPro" id="IPR013171">
    <property type="entry name" value="Cyd/dCyd_deaminase_Zn-bd"/>
</dbReference>
<dbReference type="InterPro" id="IPR050202">
    <property type="entry name" value="Cyt/Deoxycyt_deaminase"/>
</dbReference>
<dbReference type="InterPro" id="IPR006263">
    <property type="entry name" value="Cyt_deam_dimer"/>
</dbReference>
<dbReference type="InterPro" id="IPR016193">
    <property type="entry name" value="Cytidine_deaminase-like"/>
</dbReference>
<dbReference type="InterPro" id="IPR020797">
    <property type="entry name" value="Cytidine_deaminase_bacteria"/>
</dbReference>
<dbReference type="NCBIfam" id="TIGR01355">
    <property type="entry name" value="cyt_deam_dimer"/>
    <property type="match status" value="1"/>
</dbReference>
<dbReference type="NCBIfam" id="NF006537">
    <property type="entry name" value="PRK09027.1"/>
    <property type="match status" value="1"/>
</dbReference>
<dbReference type="PANTHER" id="PTHR11644">
    <property type="entry name" value="CYTIDINE DEAMINASE"/>
    <property type="match status" value="1"/>
</dbReference>
<dbReference type="PANTHER" id="PTHR11644:SF2">
    <property type="entry name" value="CYTIDINE DEAMINASE"/>
    <property type="match status" value="1"/>
</dbReference>
<dbReference type="Pfam" id="PF00383">
    <property type="entry name" value="dCMP_cyt_deam_1"/>
    <property type="match status" value="1"/>
</dbReference>
<dbReference type="Pfam" id="PF08211">
    <property type="entry name" value="dCMP_cyt_deam_2"/>
    <property type="match status" value="1"/>
</dbReference>
<dbReference type="PIRSF" id="PIRSF006334">
    <property type="entry name" value="Cdd_plus_pseudo"/>
    <property type="match status" value="1"/>
</dbReference>
<dbReference type="SUPFAM" id="SSF53927">
    <property type="entry name" value="Cytidine deaminase-like"/>
    <property type="match status" value="2"/>
</dbReference>
<dbReference type="PROSITE" id="PS00903">
    <property type="entry name" value="CYT_DCMP_DEAMINASES_1"/>
    <property type="match status" value="1"/>
</dbReference>
<dbReference type="PROSITE" id="PS51747">
    <property type="entry name" value="CYT_DCMP_DEAMINASES_2"/>
    <property type="match status" value="2"/>
</dbReference>
<reference key="1">
    <citation type="journal article" date="2009" name="PLoS Genet.">
        <title>Organised genome dynamics in the Escherichia coli species results in highly diverse adaptive paths.</title>
        <authorList>
            <person name="Touchon M."/>
            <person name="Hoede C."/>
            <person name="Tenaillon O."/>
            <person name="Barbe V."/>
            <person name="Baeriswyl S."/>
            <person name="Bidet P."/>
            <person name="Bingen E."/>
            <person name="Bonacorsi S."/>
            <person name="Bouchier C."/>
            <person name="Bouvet O."/>
            <person name="Calteau A."/>
            <person name="Chiapello H."/>
            <person name="Clermont O."/>
            <person name="Cruveiller S."/>
            <person name="Danchin A."/>
            <person name="Diard M."/>
            <person name="Dossat C."/>
            <person name="Karoui M.E."/>
            <person name="Frapy E."/>
            <person name="Garry L."/>
            <person name="Ghigo J.M."/>
            <person name="Gilles A.M."/>
            <person name="Johnson J."/>
            <person name="Le Bouguenec C."/>
            <person name="Lescat M."/>
            <person name="Mangenot S."/>
            <person name="Martinez-Jehanne V."/>
            <person name="Matic I."/>
            <person name="Nassif X."/>
            <person name="Oztas S."/>
            <person name="Petit M.A."/>
            <person name="Pichon C."/>
            <person name="Rouy Z."/>
            <person name="Ruf C.S."/>
            <person name="Schneider D."/>
            <person name="Tourret J."/>
            <person name="Vacherie B."/>
            <person name="Vallenet D."/>
            <person name="Medigue C."/>
            <person name="Rocha E.P.C."/>
            <person name="Denamur E."/>
        </authorList>
    </citation>
    <scope>NUCLEOTIDE SEQUENCE [LARGE SCALE GENOMIC DNA]</scope>
    <source>
        <strain>S88 / ExPEC</strain>
    </source>
</reference>
<sequence length="294" mass="31567">MHPRFQTAFAQLADNLQSALEPILADKYFPALLTGEQVSSLKSATGLDEDALAFALLPLAAACARTPLSNFNVGAIARGVSGTWYFGANMEFIGATMQQTVHAEQSAISHAWLSGEKALAAITVNYTPCGHCRQFMNELNSGLDLRIHLPGREAHALRDYLPDAFGPKDLEIKTLLMDEQDHGYALTGDALSQAAIAAANRSHMPYSKSPSGVALECKDGRIFSGSYAENAAFNPTLPPLQGALILLNLKGYDYPDIQRAVLAEKADAPLIQWDATSATLKALGCHNIDRVLLA</sequence>
<organism>
    <name type="scientific">Escherichia coli O45:K1 (strain S88 / ExPEC)</name>
    <dbReference type="NCBI Taxonomy" id="585035"/>
    <lineage>
        <taxon>Bacteria</taxon>
        <taxon>Pseudomonadati</taxon>
        <taxon>Pseudomonadota</taxon>
        <taxon>Gammaproteobacteria</taxon>
        <taxon>Enterobacterales</taxon>
        <taxon>Enterobacteriaceae</taxon>
        <taxon>Escherichia</taxon>
    </lineage>
</organism>
<evidence type="ECO:0000255" key="1">
    <source>
        <dbReference type="HAMAP-Rule" id="MF_01558"/>
    </source>
</evidence>
<evidence type="ECO:0000255" key="2">
    <source>
        <dbReference type="PROSITE-ProRule" id="PRU01083"/>
    </source>
</evidence>
<proteinExistence type="inferred from homology"/>
<accession>B7MF55</accession>
<keyword id="KW-0378">Hydrolase</keyword>
<keyword id="KW-0479">Metal-binding</keyword>
<keyword id="KW-1185">Reference proteome</keyword>
<keyword id="KW-0862">Zinc</keyword>
<comment type="function">
    <text evidence="1">This enzyme scavenges exogenous and endogenous cytidine and 2'-deoxycytidine for UMP synthesis.</text>
</comment>
<comment type="catalytic activity">
    <reaction evidence="1">
        <text>cytidine + H2O + H(+) = uridine + NH4(+)</text>
        <dbReference type="Rhea" id="RHEA:16069"/>
        <dbReference type="ChEBI" id="CHEBI:15377"/>
        <dbReference type="ChEBI" id="CHEBI:15378"/>
        <dbReference type="ChEBI" id="CHEBI:16704"/>
        <dbReference type="ChEBI" id="CHEBI:17562"/>
        <dbReference type="ChEBI" id="CHEBI:28938"/>
        <dbReference type="EC" id="3.5.4.5"/>
    </reaction>
</comment>
<comment type="catalytic activity">
    <reaction evidence="1">
        <text>2'-deoxycytidine + H2O + H(+) = 2'-deoxyuridine + NH4(+)</text>
        <dbReference type="Rhea" id="RHEA:13433"/>
        <dbReference type="ChEBI" id="CHEBI:15377"/>
        <dbReference type="ChEBI" id="CHEBI:15378"/>
        <dbReference type="ChEBI" id="CHEBI:15698"/>
        <dbReference type="ChEBI" id="CHEBI:16450"/>
        <dbReference type="ChEBI" id="CHEBI:28938"/>
        <dbReference type="EC" id="3.5.4.5"/>
    </reaction>
</comment>
<comment type="cofactor">
    <cofactor evidence="1">
        <name>Zn(2+)</name>
        <dbReference type="ChEBI" id="CHEBI:29105"/>
    </cofactor>
    <text evidence="1">Binds 1 zinc ion.</text>
</comment>
<comment type="subunit">
    <text evidence="1">Homodimer.</text>
</comment>
<comment type="similarity">
    <text evidence="1">Belongs to the cytidine and deoxycytidylate deaminase family.</text>
</comment>
<feature type="chain" id="PRO_1000147095" description="Cytidine deaminase">
    <location>
        <begin position="1"/>
        <end position="294"/>
    </location>
</feature>
<feature type="domain" description="CMP/dCMP-type deaminase 1" evidence="2">
    <location>
        <begin position="48"/>
        <end position="168"/>
    </location>
</feature>
<feature type="domain" description="CMP/dCMP-type deaminase 2" evidence="2">
    <location>
        <begin position="186"/>
        <end position="294"/>
    </location>
</feature>
<feature type="active site" description="Proton donor" evidence="1">
    <location>
        <position position="104"/>
    </location>
</feature>
<feature type="binding site" evidence="1">
    <location>
        <begin position="89"/>
        <end position="91"/>
    </location>
    <ligand>
        <name>substrate</name>
    </ligand>
</feature>
<feature type="binding site" evidence="1">
    <location>
        <position position="102"/>
    </location>
    <ligand>
        <name>Zn(2+)</name>
        <dbReference type="ChEBI" id="CHEBI:29105"/>
        <note>catalytic</note>
    </ligand>
</feature>
<feature type="binding site" evidence="1">
    <location>
        <position position="129"/>
    </location>
    <ligand>
        <name>Zn(2+)</name>
        <dbReference type="ChEBI" id="CHEBI:29105"/>
        <note>catalytic</note>
    </ligand>
</feature>
<feature type="binding site" evidence="1">
    <location>
        <position position="132"/>
    </location>
    <ligand>
        <name>Zn(2+)</name>
        <dbReference type="ChEBI" id="CHEBI:29105"/>
        <note>catalytic</note>
    </ligand>
</feature>